<keyword id="KW-0066">ATP synthesis</keyword>
<keyword id="KW-0139">CF(1)</keyword>
<keyword id="KW-0150">Chloroplast</keyword>
<keyword id="KW-0375">Hydrogen ion transport</keyword>
<keyword id="KW-0406">Ion transport</keyword>
<keyword id="KW-0472">Membrane</keyword>
<keyword id="KW-0934">Plastid</keyword>
<keyword id="KW-0793">Thylakoid</keyword>
<keyword id="KW-0809">Transit peptide</keyword>
<keyword id="KW-0813">Transport</keyword>
<organism>
    <name type="scientific">Sorghum bicolor</name>
    <name type="common">Sorghum</name>
    <name type="synonym">Sorghum vulgare</name>
    <dbReference type="NCBI Taxonomy" id="4558"/>
    <lineage>
        <taxon>Eukaryota</taxon>
        <taxon>Viridiplantae</taxon>
        <taxon>Streptophyta</taxon>
        <taxon>Embryophyta</taxon>
        <taxon>Tracheophyta</taxon>
        <taxon>Spermatophyta</taxon>
        <taxon>Magnoliopsida</taxon>
        <taxon>Liliopsida</taxon>
        <taxon>Poales</taxon>
        <taxon>Poaceae</taxon>
        <taxon>PACMAD clade</taxon>
        <taxon>Panicoideae</taxon>
        <taxon>Andropogonodae</taxon>
        <taxon>Andropogoneae</taxon>
        <taxon>Sorghinae</taxon>
        <taxon>Sorghum</taxon>
    </lineage>
</organism>
<comment type="function">
    <text>This protein seems to be part of the stalk that links CF(0) to CF(1). It either transmits conformational changes from CF(0) into CF(1) or is implicated in proton conduction.</text>
</comment>
<comment type="subunit">
    <text>F-type ATPases have 2 components, CF(1) - the catalytic core - and CF(0) - the membrane proton channel. CF(1) has five subunits: alpha(3), beta(3), gamma(1), delta(1), epsilon(1). CF(0) has three main subunits: a, b and c.</text>
</comment>
<comment type="subcellular location">
    <subcellularLocation>
        <location>Plastid</location>
        <location>Chloroplast thylakoid membrane</location>
    </subcellularLocation>
</comment>
<comment type="similarity">
    <text evidence="2">Belongs to the ATPase delta chain family.</text>
</comment>
<reference key="1">
    <citation type="journal article" date="1993" name="Biochim. Biophys. Acta">
        <title>Primary structure, deduced from cDNA, secondary structure analysis and conclusions concerning interaction surfaces of the delta subunit of the photosynthetic ATP-synthase (E.C. 3.6.3.14) from millet (Sorghum bicolor) and maize (Zea mays).</title>
        <authorList>
            <person name="Hoesche J.A."/>
            <person name="Berzborn R.J."/>
        </authorList>
    </citation>
    <scope>NUCLEOTIDE SEQUENCE [MRNA]</scope>
</reference>
<sequence length="247" mass="26736">MAALRLASFTLRPAAAAAASASSGATPAAPRSASFARAARGLPSLRLAPPRRRGDLVRPRAEAAADSYASALSEVAVENGTLEQTVSDLEKLQKIFADETVAEFFDNPTVPREEKTALIDEIAKSYELQPHVVNFINVVVDNFRATILPEIVVEFENIFNSLTGTEVATVTSVVQLESQDLAQIAQHVQKMTGAKNVRLKTQLDPELIAGFTVQYGRDGSSLIDMSVRKQIEEITSEFELPDVPLEV</sequence>
<proteinExistence type="evidence at transcript level"/>
<accession>Q07300</accession>
<dbReference type="EMBL" id="X66004">
    <property type="protein sequence ID" value="CAA46803.1"/>
    <property type="molecule type" value="mRNA"/>
</dbReference>
<dbReference type="PIR" id="S43728">
    <property type="entry name" value="S43728"/>
</dbReference>
<dbReference type="RefSeq" id="XP_002454273.1">
    <property type="nucleotide sequence ID" value="XM_002454228.1"/>
</dbReference>
<dbReference type="SMR" id="Q07300"/>
<dbReference type="EnsemblPlants" id="EES07249">
    <property type="protein sequence ID" value="EES07249"/>
    <property type="gene ID" value="SORBI_3004G235200"/>
</dbReference>
<dbReference type="GeneID" id="8066424"/>
<dbReference type="Gramene" id="EES07249">
    <property type="protein sequence ID" value="EES07249"/>
    <property type="gene ID" value="SORBI_3004G235200"/>
</dbReference>
<dbReference type="KEGG" id="sbi:8066424"/>
<dbReference type="eggNOG" id="KOG1662">
    <property type="taxonomic scope" value="Eukaryota"/>
</dbReference>
<dbReference type="HOGENOM" id="CLU_085114_1_0_1"/>
<dbReference type="OMA" id="FPIRINN"/>
<dbReference type="OrthoDB" id="1262810at2759"/>
<dbReference type="ExpressionAtlas" id="Q07300">
    <property type="expression patterns" value="baseline and differential"/>
</dbReference>
<dbReference type="GO" id="GO:0009535">
    <property type="term" value="C:chloroplast thylakoid membrane"/>
    <property type="evidence" value="ECO:0007669"/>
    <property type="project" value="UniProtKB-SubCell"/>
</dbReference>
<dbReference type="GO" id="GO:0045259">
    <property type="term" value="C:proton-transporting ATP synthase complex"/>
    <property type="evidence" value="ECO:0007669"/>
    <property type="project" value="UniProtKB-KW"/>
</dbReference>
<dbReference type="GO" id="GO:0010319">
    <property type="term" value="C:stromule"/>
    <property type="evidence" value="ECO:0007669"/>
    <property type="project" value="EnsemblPlants"/>
</dbReference>
<dbReference type="GO" id="GO:0003729">
    <property type="term" value="F:mRNA binding"/>
    <property type="evidence" value="ECO:0007669"/>
    <property type="project" value="EnsemblPlants"/>
</dbReference>
<dbReference type="GO" id="GO:0046933">
    <property type="term" value="F:proton-transporting ATP synthase activity, rotational mechanism"/>
    <property type="evidence" value="ECO:0007669"/>
    <property type="project" value="InterPro"/>
</dbReference>
<dbReference type="GO" id="GO:0009773">
    <property type="term" value="P:photosynthetic electron transport in photosystem I"/>
    <property type="evidence" value="ECO:0007669"/>
    <property type="project" value="EnsemblPlants"/>
</dbReference>
<dbReference type="GO" id="GO:0009772">
    <property type="term" value="P:photosynthetic electron transport in photosystem II"/>
    <property type="evidence" value="ECO:0007669"/>
    <property type="project" value="EnsemblPlants"/>
</dbReference>
<dbReference type="GO" id="GO:0009409">
    <property type="term" value="P:response to cold"/>
    <property type="evidence" value="ECO:0007669"/>
    <property type="project" value="EnsemblPlants"/>
</dbReference>
<dbReference type="Gene3D" id="1.10.520.20">
    <property type="entry name" value="N-terminal domain of the delta subunit of the F1F0-ATP synthase"/>
    <property type="match status" value="1"/>
</dbReference>
<dbReference type="HAMAP" id="MF_01416">
    <property type="entry name" value="ATP_synth_delta_bact"/>
    <property type="match status" value="1"/>
</dbReference>
<dbReference type="InterPro" id="IPR026015">
    <property type="entry name" value="ATP_synth_OSCP/delta_N_sf"/>
</dbReference>
<dbReference type="InterPro" id="IPR020781">
    <property type="entry name" value="ATPase_OSCP/d_CS"/>
</dbReference>
<dbReference type="InterPro" id="IPR000711">
    <property type="entry name" value="ATPase_OSCP/dsu"/>
</dbReference>
<dbReference type="NCBIfam" id="TIGR01145">
    <property type="entry name" value="ATP_synt_delta"/>
    <property type="match status" value="1"/>
</dbReference>
<dbReference type="PANTHER" id="PTHR11910">
    <property type="entry name" value="ATP SYNTHASE DELTA CHAIN"/>
    <property type="match status" value="1"/>
</dbReference>
<dbReference type="Pfam" id="PF00213">
    <property type="entry name" value="OSCP"/>
    <property type="match status" value="1"/>
</dbReference>
<dbReference type="PRINTS" id="PR00125">
    <property type="entry name" value="ATPASEDELTA"/>
</dbReference>
<dbReference type="SUPFAM" id="SSF47928">
    <property type="entry name" value="N-terminal domain of the delta subunit of the F1F0-ATP synthase"/>
    <property type="match status" value="1"/>
</dbReference>
<dbReference type="PROSITE" id="PS00389">
    <property type="entry name" value="ATPASE_DELTA"/>
    <property type="match status" value="1"/>
</dbReference>
<protein>
    <recommendedName>
        <fullName>ATP synthase delta chain, chloroplastic</fullName>
    </recommendedName>
    <alternativeName>
        <fullName>F-ATPase delta chain</fullName>
    </alternativeName>
</protein>
<gene>
    <name type="primary">ATPD</name>
    <name type="ordered locus">Sb03g017580</name>
</gene>
<name>ATPD_SORBI</name>
<evidence type="ECO:0000250" key="1"/>
<evidence type="ECO:0000305" key="2"/>
<feature type="transit peptide" description="Chloroplast" evidence="1">
    <location>
        <begin position="1"/>
        <end position="60"/>
    </location>
</feature>
<feature type="chain" id="PRO_0000002640" description="ATP synthase delta chain, chloroplastic">
    <location>
        <begin position="61"/>
        <end position="247"/>
    </location>
</feature>